<accession>Q69TW5</accession>
<accession>E3TB03</accession>
<name>BZP46_ORYSJ</name>
<reference key="1">
    <citation type="journal article" date="2010" name="J. Plant Physiol.">
        <title>The ABRE-binding bZIP transcription factor OsABF2 is a positive regulator of abiotic stress and ABA signaling in rice.</title>
        <authorList>
            <person name="Hossain M.A."/>
            <person name="Cho J.I."/>
            <person name="Han M."/>
            <person name="Ahn C.H."/>
            <person name="Jeon J.S."/>
            <person name="An G."/>
            <person name="Park P.B."/>
        </authorList>
    </citation>
    <scope>NUCLEOTIDE SEQUENCE [MRNA]</scope>
    <scope>FUNCTION</scope>
    <scope>SUBCELLULAR LOCATION</scope>
    <scope>TISSUE SPECIFICITY</scope>
    <scope>INDUCTION</scope>
</reference>
<reference key="2">
    <citation type="journal article" date="2005" name="Nature">
        <title>The map-based sequence of the rice genome.</title>
        <authorList>
            <consortium name="International rice genome sequencing project (IRGSP)"/>
        </authorList>
    </citation>
    <scope>NUCLEOTIDE SEQUENCE [LARGE SCALE GENOMIC DNA]</scope>
    <source>
        <strain>cv. Nipponbare</strain>
    </source>
</reference>
<reference key="3">
    <citation type="journal article" date="2008" name="Nucleic Acids Res.">
        <title>The rice annotation project database (RAP-DB): 2008 update.</title>
        <authorList>
            <consortium name="The rice annotation project (RAP)"/>
        </authorList>
    </citation>
    <scope>GENOME REANNOTATION</scope>
    <source>
        <strain>cv. Nipponbare</strain>
    </source>
</reference>
<reference key="4">
    <citation type="journal article" date="2013" name="Rice">
        <title>Improvement of the Oryza sativa Nipponbare reference genome using next generation sequence and optical map data.</title>
        <authorList>
            <person name="Kawahara Y."/>
            <person name="de la Bastide M."/>
            <person name="Hamilton J.P."/>
            <person name="Kanamori H."/>
            <person name="McCombie W.R."/>
            <person name="Ouyang S."/>
            <person name="Schwartz D.C."/>
            <person name="Tanaka T."/>
            <person name="Wu J."/>
            <person name="Zhou S."/>
            <person name="Childs K.L."/>
            <person name="Davidson R.M."/>
            <person name="Lin H."/>
            <person name="Quesada-Ocampo L."/>
            <person name="Vaillancourt B."/>
            <person name="Sakai H."/>
            <person name="Lee S.S."/>
            <person name="Kim J."/>
            <person name="Numa H."/>
            <person name="Itoh T."/>
            <person name="Buell C.R."/>
            <person name="Matsumoto T."/>
        </authorList>
    </citation>
    <scope>GENOME REANNOTATION</scope>
    <source>
        <strain>cv. Nipponbare</strain>
    </source>
</reference>
<reference key="5">
    <citation type="journal article" date="2003" name="Science">
        <title>Collection, mapping, and annotation of over 28,000 cDNA clones from japonica rice.</title>
        <authorList>
            <consortium name="The rice full-length cDNA consortium"/>
        </authorList>
    </citation>
    <scope>NUCLEOTIDE SEQUENCE [LARGE SCALE MRNA]</scope>
    <source>
        <strain>cv. Nipponbare</strain>
    </source>
</reference>
<reference key="6">
    <citation type="journal article" date="2008" name="New Phytol.">
        <title>Abscisic acid regulates gene expression in cortical fiber cells and silica cells of rice shoots.</title>
        <authorList>
            <person name="Shobbar Z.S."/>
            <person name="Oane R."/>
            <person name="Gamuyao R."/>
            <person name="De Palma J."/>
            <person name="Malboobi M.A."/>
            <person name="Karimzadeh G."/>
            <person name="Javaran M.J."/>
            <person name="Bennett J."/>
        </authorList>
    </citation>
    <scope>INDUCTION BY ABSCISIC ACID</scope>
</reference>
<reference key="7">
    <citation type="journal article" date="2008" name="Plant Physiol.">
        <title>Genomic survey and gene expression analysis of the basic leucine zipper transcription factor family in rice.</title>
        <authorList>
            <person name="Nijhawan A."/>
            <person name="Jain M."/>
            <person name="Tyagi A.K."/>
            <person name="Khurana J.P."/>
        </authorList>
    </citation>
    <scope>GENE FAMILY</scope>
    <scope>NOMENCLATURE</scope>
</reference>
<reference key="8">
    <citation type="journal article" date="2010" name="Plant J.">
        <title>AREB1, AREB2, and ABF3 are master transcription factors that cooperatively regulate ABRE-dependent ABA signaling involved in drought stress tolerance and require ABA for full activation.</title>
        <authorList>
            <person name="Yoshida T."/>
            <person name="Fujita Y."/>
            <person name="Sayama H."/>
            <person name="Kidokoro S."/>
            <person name="Maruyama K."/>
            <person name="Mizoi J."/>
            <person name="Shinozaki K."/>
            <person name="Yamaguchi-Shinozaki K."/>
        </authorList>
    </citation>
    <scope>FUNCTION</scope>
</reference>
<reference key="9">
    <citation type="journal article" date="2011" name="Plant Physiol.">
        <title>Rice ABI5-Like1 regulates abscisic acid and auxin responses by affecting the expression of ABRE-containing genes.</title>
        <authorList>
            <person name="Yang X."/>
            <person name="Yang Y.N."/>
            <person name="Xue L.J."/>
            <person name="Zou M.J."/>
            <person name="Liu J.Y."/>
            <person name="Chen F."/>
            <person name="Xue H.W."/>
        </authorList>
    </citation>
    <scope>FUNCTION</scope>
    <scope>SUBCELLULAR LOCATION</scope>
    <scope>TISSUE SPECIFICITY</scope>
    <scope>INDUCTION</scope>
    <scope>DISRUPTION PHENOTYPE</scope>
</reference>
<reference key="10">
    <citation type="journal article" date="2012" name="Plant Physiol.">
        <title>Constitutive activation of transcription factor OsbZIP46 improves drought tolerance in rice.</title>
        <authorList>
            <person name="Tang N."/>
            <person name="Zhang H."/>
            <person name="Li X."/>
            <person name="Xiao J."/>
            <person name="Xiong L."/>
        </authorList>
    </citation>
    <scope>FUNCTION</scope>
    <scope>INTERACTION WITH SAPK2; SAPK6 AND SAPK9</scope>
    <scope>SUBCELLULAR LOCATION</scope>
    <scope>INDUCTION</scope>
    <scope>PHOSPHORYLATION</scope>
</reference>
<reference key="11">
    <citation type="journal article" date="2015" name="Front. Plant Sci.">
        <title>Functional characterization and reconstitution of ABA signaling components using transient gene expression in rice protoplasts.</title>
        <authorList>
            <person name="Kim N."/>
            <person name="Moon S.J."/>
            <person name="Min M.K."/>
            <person name="Choi E.H."/>
            <person name="Kim J.A."/>
            <person name="Koh E.Y."/>
            <person name="Yoon I."/>
            <person name="Byun M.O."/>
            <person name="Yoo S.D."/>
            <person name="Kim B.G."/>
        </authorList>
    </citation>
    <scope>FUNCTION</scope>
    <scope>SUBCELLULAR LOCATION</scope>
</reference>
<reference key="12">
    <citation type="journal article" date="2016" name="Plant Cell">
        <title>MODD mediates deactivation and degradation of OsbZIP46 to negatively regulate ABA signaling and drought resistance in rice.</title>
        <authorList>
            <person name="Tang N."/>
            <person name="Ma S."/>
            <person name="Zong W."/>
            <person name="Yang N."/>
            <person name="Lv Y."/>
            <person name="Yan C."/>
            <person name="Guo Z."/>
            <person name="Li J."/>
            <person name="Li X."/>
            <person name="Xiang Y."/>
            <person name="Song H."/>
            <person name="Xiao J."/>
            <person name="Li X."/>
            <person name="Xiong L."/>
        </authorList>
    </citation>
    <scope>FUNCTION</scope>
    <scope>INTERACTION WITH MODD</scope>
    <scope>SUBCELLULAR LOCATION</scope>
</reference>
<dbReference type="EMBL" id="GU552783">
    <property type="protein sequence ID" value="ADK60888.1"/>
    <property type="molecule type" value="mRNA"/>
</dbReference>
<dbReference type="EMBL" id="AP003458">
    <property type="protein sequence ID" value="BAD35171.1"/>
    <property type="molecule type" value="Genomic_DNA"/>
</dbReference>
<dbReference type="EMBL" id="AP004687">
    <property type="protein sequence ID" value="BAD35712.1"/>
    <property type="molecule type" value="Genomic_DNA"/>
</dbReference>
<dbReference type="EMBL" id="AP008212">
    <property type="protein sequence ID" value="BAF19032.1"/>
    <property type="molecule type" value="Genomic_DNA"/>
</dbReference>
<dbReference type="EMBL" id="AP014962">
    <property type="protein sequence ID" value="BAS96743.1"/>
    <property type="molecule type" value="Genomic_DNA"/>
</dbReference>
<dbReference type="EMBL" id="AK103188">
    <property type="protein sequence ID" value="BAG95943.1"/>
    <property type="molecule type" value="mRNA"/>
</dbReference>
<dbReference type="EMBL" id="AK105312">
    <property type="protein sequence ID" value="BAG97190.1"/>
    <property type="molecule type" value="mRNA"/>
</dbReference>
<dbReference type="SMR" id="Q69TW5"/>
<dbReference type="FunCoup" id="Q69TW5">
    <property type="interactions" value="104"/>
</dbReference>
<dbReference type="STRING" id="39947.Q69TW5"/>
<dbReference type="PaxDb" id="39947-Q69TW5"/>
<dbReference type="EnsemblPlants" id="Os06t0211200-01">
    <property type="protein sequence ID" value="Os06t0211200-01"/>
    <property type="gene ID" value="Os06g0211200"/>
</dbReference>
<dbReference type="EnsemblPlants" id="Os06t0211200-02">
    <property type="protein sequence ID" value="Os06t0211200-02"/>
    <property type="gene ID" value="Os06g0211200"/>
</dbReference>
<dbReference type="GeneID" id="4340462"/>
<dbReference type="Gramene" id="Os06t0211200-01">
    <property type="protein sequence ID" value="Os06t0211200-01"/>
    <property type="gene ID" value="Os06g0211200"/>
</dbReference>
<dbReference type="Gramene" id="Os06t0211200-02">
    <property type="protein sequence ID" value="Os06t0211200-02"/>
    <property type="gene ID" value="Os06g0211200"/>
</dbReference>
<dbReference type="KEGG" id="dosa:Os06g0211200"/>
<dbReference type="KEGG" id="osa:4340462"/>
<dbReference type="eggNOG" id="ENOG502QPP6">
    <property type="taxonomic scope" value="Eukaryota"/>
</dbReference>
<dbReference type="HOGENOM" id="CLU_043238_1_0_1"/>
<dbReference type="InParanoid" id="Q69TW5"/>
<dbReference type="OMA" id="FCDDEPE"/>
<dbReference type="OrthoDB" id="1927218at2759"/>
<dbReference type="PlantReactome" id="R-OSA-3899351">
    <property type="pathway name" value="Abscisic acid (ABA) mediated signaling"/>
</dbReference>
<dbReference type="Proteomes" id="UP000000763">
    <property type="component" value="Chromosome 6"/>
</dbReference>
<dbReference type="Proteomes" id="UP000059680">
    <property type="component" value="Chromosome 6"/>
</dbReference>
<dbReference type="GO" id="GO:0005634">
    <property type="term" value="C:nucleus"/>
    <property type="evidence" value="ECO:0000314"/>
    <property type="project" value="UniProtKB"/>
</dbReference>
<dbReference type="GO" id="GO:0003700">
    <property type="term" value="F:DNA-binding transcription factor activity"/>
    <property type="evidence" value="ECO:0007669"/>
    <property type="project" value="InterPro"/>
</dbReference>
<dbReference type="GO" id="GO:0043565">
    <property type="term" value="F:sequence-specific DNA binding"/>
    <property type="evidence" value="ECO:0000314"/>
    <property type="project" value="UniProtKB"/>
</dbReference>
<dbReference type="GO" id="GO:0009738">
    <property type="term" value="P:abscisic acid-activated signaling pathway"/>
    <property type="evidence" value="ECO:0007669"/>
    <property type="project" value="UniProtKB-KW"/>
</dbReference>
<dbReference type="GO" id="GO:0009789">
    <property type="term" value="P:positive regulation of abscisic acid-activated signaling pathway"/>
    <property type="evidence" value="ECO:0000315"/>
    <property type="project" value="UniProtKB"/>
</dbReference>
<dbReference type="GO" id="GO:0045893">
    <property type="term" value="P:positive regulation of DNA-templated transcription"/>
    <property type="evidence" value="ECO:0007669"/>
    <property type="project" value="InterPro"/>
</dbReference>
<dbReference type="GO" id="GO:0006355">
    <property type="term" value="P:regulation of DNA-templated transcription"/>
    <property type="evidence" value="ECO:0000314"/>
    <property type="project" value="UniProtKB"/>
</dbReference>
<dbReference type="GO" id="GO:0009651">
    <property type="term" value="P:response to salt stress"/>
    <property type="evidence" value="ECO:0000315"/>
    <property type="project" value="UniProtKB"/>
</dbReference>
<dbReference type="GO" id="GO:0009414">
    <property type="term" value="P:response to water deprivation"/>
    <property type="evidence" value="ECO:0000315"/>
    <property type="project" value="UniProtKB"/>
</dbReference>
<dbReference type="CDD" id="cd14707">
    <property type="entry name" value="bZIP_plant_BZIP46"/>
    <property type="match status" value="1"/>
</dbReference>
<dbReference type="FunFam" id="1.20.5.170:FF:000048">
    <property type="entry name" value="ABSCISIC ACID-INSENSITIVE 5-like protein 5"/>
    <property type="match status" value="1"/>
</dbReference>
<dbReference type="Gene3D" id="1.20.5.170">
    <property type="match status" value="1"/>
</dbReference>
<dbReference type="InterPro" id="IPR004827">
    <property type="entry name" value="bZIP"/>
</dbReference>
<dbReference type="InterPro" id="IPR043452">
    <property type="entry name" value="BZIP46-like"/>
</dbReference>
<dbReference type="InterPro" id="IPR046347">
    <property type="entry name" value="bZIP_sf"/>
</dbReference>
<dbReference type="PANTHER" id="PTHR22952:SF446">
    <property type="entry name" value="ABSCISIC ACID-INSENSITIVE 5-LIKE PROTEIN 5-RELATED"/>
    <property type="match status" value="1"/>
</dbReference>
<dbReference type="PANTHER" id="PTHR22952">
    <property type="entry name" value="CAMP-RESPONSE ELEMENT BINDING PROTEIN-RELATED"/>
    <property type="match status" value="1"/>
</dbReference>
<dbReference type="Pfam" id="PF00170">
    <property type="entry name" value="bZIP_1"/>
    <property type="match status" value="1"/>
</dbReference>
<dbReference type="SMART" id="SM00338">
    <property type="entry name" value="BRLZ"/>
    <property type="match status" value="1"/>
</dbReference>
<dbReference type="SUPFAM" id="SSF57959">
    <property type="entry name" value="Leucine zipper domain"/>
    <property type="match status" value="1"/>
</dbReference>
<dbReference type="PROSITE" id="PS50217">
    <property type="entry name" value="BZIP"/>
    <property type="match status" value="1"/>
</dbReference>
<dbReference type="PROSITE" id="PS00036">
    <property type="entry name" value="BZIP_BASIC"/>
    <property type="match status" value="1"/>
</dbReference>
<proteinExistence type="evidence at protein level"/>
<gene>
    <name evidence="10" type="primary">BZIP46</name>
    <name evidence="13" type="synonym">ABF2</name>
    <name evidence="11" type="synonym">ABF3</name>
    <name evidence="14" type="synonym">ABL1</name>
    <name evidence="12" type="synonym">AREB8</name>
    <name evidence="18" type="ordered locus">Os06g0211200</name>
    <name evidence="15" type="ordered locus">LOC_Os06g10880</name>
    <name evidence="17" type="ORF">P0021C04.25</name>
    <name evidence="16" type="ORF">P0701E03.2</name>
</gene>
<keyword id="KW-0938">Abscisic acid signaling pathway</keyword>
<keyword id="KW-0238">DNA-binding</keyword>
<keyword id="KW-0539">Nucleus</keyword>
<keyword id="KW-1185">Reference proteome</keyword>
<keyword id="KW-0346">Stress response</keyword>
<keyword id="KW-0804">Transcription</keyword>
<keyword id="KW-0805">Transcription regulation</keyword>
<comment type="function">
    <text evidence="4 5 6 7 8 9">Transcription factor involved in abscisic acid (ABA) signaling pathway (PubMed:19947981, PubMed:20576316, PubMed:21546455, PubMed:22301130, PubMed:26300907, PubMed:27468891). Transcription factor activity is fully activated by ABA (PubMed:19947981, PubMed:26300907, PubMed:27468891). Acts as a positive regulator of the expression of abiotic stress-responsive genes through an ABA-dependent signaling pathway (PubMed:20576316). Acts as a positive regulator of ABA signaling and drought stress tolerance (PubMed:22301130). Plays an important role in ABA and auxin responses. Involved in ABA signaling and stress responses by directly binding to the ABA-responsive element (ABRE)-containing genes, especially WRKY family genes. Modulates response to auxin. Suppresses auxin signaling by targeting ABRE-containing genes related to auxin metabolism or signaling (PubMed:21546455).</text>
</comment>
<comment type="subunit">
    <text evidence="7 9">Interacts with MODD (PubMed:27468891). Interacts with SAPK2, SAPK6 and SAPK9 (PubMed:22301130).</text>
</comment>
<comment type="subcellular location">
    <subcellularLocation>
        <location evidence="1 5 6 7 8 9">Nucleus</location>
    </subcellularLocation>
</comment>
<comment type="tissue specificity">
    <text evidence="5 6">Expressed in roots, shoots, leaves, flag leaves, stems, flowers and panicles (PubMed:20576316). Widely expressed (PubMed:21546455).</text>
</comment>
<comment type="induction">
    <text evidence="3 5 6 7">Induced by abscisic acid (ABA) (PubMed:18315698, PubMed:20576316, PubMed:21546455, PubMed:22301130). Induced by auxin (PubMed:21546455, PubMed:22301130). Induced by gibberellin (PubMed:21546455). Induced by salt and drought stresses (PubMed:20576316, PubMed:21546455, PubMed:22301130). Induced by cold stress (PubMed:20576316). Induced by oxidative stress (PubMed:20576316, PubMed:22301130).</text>
</comment>
<comment type="PTM">
    <text evidence="7">Phosphorylated on serine and threonine residues by SAPK2, SAPK6 and SAPK9. Phosphorylation is required for full transactivation activity.</text>
</comment>
<comment type="disruption phenotype">
    <text evidence="5 6">No visible phenotype under normal growth conditions, but mutant plants exhibit increased sensitivity to salt and drought stresses (PubMed:20576316). Decreased sensitivity to abscisic acid (ABA) (PubMed:20576316, PubMed:21546455).</text>
</comment>
<comment type="miscellaneous">
    <text evidence="7">Plants over-expressing BZIP46 display increased sensitivity to abscisic acid (ABA).</text>
</comment>
<organism>
    <name type="scientific">Oryza sativa subsp. japonica</name>
    <name type="common">Rice</name>
    <dbReference type="NCBI Taxonomy" id="39947"/>
    <lineage>
        <taxon>Eukaryota</taxon>
        <taxon>Viridiplantae</taxon>
        <taxon>Streptophyta</taxon>
        <taxon>Embryophyta</taxon>
        <taxon>Tracheophyta</taxon>
        <taxon>Spermatophyta</taxon>
        <taxon>Magnoliopsida</taxon>
        <taxon>Liliopsida</taxon>
        <taxon>Poales</taxon>
        <taxon>Poaceae</taxon>
        <taxon>BOP clade</taxon>
        <taxon>Oryzoideae</taxon>
        <taxon>Oryzeae</taxon>
        <taxon>Oryzinae</taxon>
        <taxon>Oryza</taxon>
        <taxon>Oryza sativa</taxon>
    </lineage>
</organism>
<evidence type="ECO:0000255" key="1">
    <source>
        <dbReference type="PROSITE-ProRule" id="PRU00978"/>
    </source>
</evidence>
<evidence type="ECO:0000256" key="2">
    <source>
        <dbReference type="SAM" id="MobiDB-lite"/>
    </source>
</evidence>
<evidence type="ECO:0000269" key="3">
    <source>
    </source>
</evidence>
<evidence type="ECO:0000269" key="4">
    <source>
    </source>
</evidence>
<evidence type="ECO:0000269" key="5">
    <source>
    </source>
</evidence>
<evidence type="ECO:0000269" key="6">
    <source>
    </source>
</evidence>
<evidence type="ECO:0000269" key="7">
    <source>
    </source>
</evidence>
<evidence type="ECO:0000269" key="8">
    <source>
    </source>
</evidence>
<evidence type="ECO:0000269" key="9">
    <source>
    </source>
</evidence>
<evidence type="ECO:0000303" key="10">
    <source>
    </source>
</evidence>
<evidence type="ECO:0000303" key="11">
    <source>
    </source>
</evidence>
<evidence type="ECO:0000303" key="12">
    <source>
    </source>
</evidence>
<evidence type="ECO:0000303" key="13">
    <source>
    </source>
</evidence>
<evidence type="ECO:0000303" key="14">
    <source>
    </source>
</evidence>
<evidence type="ECO:0000305" key="15"/>
<evidence type="ECO:0000312" key="16">
    <source>
        <dbReference type="EMBL" id="BAD35171.1"/>
    </source>
</evidence>
<evidence type="ECO:0000312" key="17">
    <source>
        <dbReference type="EMBL" id="BAD35712.1"/>
    </source>
</evidence>
<evidence type="ECO:0000312" key="18">
    <source>
        <dbReference type="EMBL" id="BAF19032.1"/>
    </source>
</evidence>
<sequence length="324" mass="34688">MELPADGSALARQGSIYSLTFDEFQSALGSAEKDFGSMNMDELLRNIWTAEESQAIAPAAAAASAAAVVGDAQQQQQPIQRQGSLTLPRTLSQKTVDEVWRDIMGLGGSDDEDPAAAAAAAAPAQRQPTLGEMTLEEFLVRAGVVREDMGQTIVLPPQAQALFPGSNVVAPAMQLANGMLPGVVGVAPGAAAAMTVAAPATPVVLNGLGKVEGGDLSSLSPVPYPFDTALRVRKGPTVEKVVERRQRRMIKNRESAARSRARKQAYIMELEAEVAKLKEQKAELQKKQVEMIQKQNDEVMERITQQLGPKAKRFCLRRTLTGPC</sequence>
<feature type="chain" id="PRO_0000440559" description="bZIP transcription factor 46">
    <location>
        <begin position="1"/>
        <end position="324"/>
    </location>
</feature>
<feature type="domain" description="bZIP" evidence="1">
    <location>
        <begin position="242"/>
        <end position="287"/>
    </location>
</feature>
<feature type="region of interest" description="Disordered" evidence="2">
    <location>
        <begin position="106"/>
        <end position="127"/>
    </location>
</feature>
<feature type="region of interest" description="Basic motif" evidence="1">
    <location>
        <begin position="244"/>
        <end position="263"/>
    </location>
</feature>
<feature type="region of interest" description="Leucine-zipper" evidence="1">
    <location>
        <begin position="270"/>
        <end position="284"/>
    </location>
</feature>
<feature type="compositionally biased region" description="Low complexity" evidence="2">
    <location>
        <begin position="115"/>
        <end position="124"/>
    </location>
</feature>
<protein>
    <recommendedName>
        <fullName evidence="15">bZIP transcription factor 46</fullName>
        <shortName evidence="10">OsBZIP46</shortName>
    </recommendedName>
    <alternativeName>
        <fullName evidence="12">AREB/ABF-family transcription factor 8</fullName>
        <shortName evidence="12">OsAREB8</shortName>
    </alternativeName>
    <alternativeName>
        <fullName evidence="13">Abscisic acid responsive elements-binding factor 2</fullName>
        <shortName evidence="13">ABRE-binding factor 2</shortName>
        <shortName evidence="13">OsABF2</shortName>
    </alternativeName>
    <alternativeName>
        <fullName evidence="11">Abscisic acid responsive elements-binding factor 3</fullName>
        <shortName evidence="11">ABRE-binding factor 3</shortName>
        <shortName evidence="11">OsABF3</shortName>
    </alternativeName>
    <alternativeName>
        <fullName evidence="14">Protein ABI5-LIKE 1</fullName>
    </alternativeName>
</protein>